<organism>
    <name type="scientific">Escherichia coli (strain K12)</name>
    <dbReference type="NCBI Taxonomy" id="83333"/>
    <lineage>
        <taxon>Bacteria</taxon>
        <taxon>Pseudomonadati</taxon>
        <taxon>Pseudomonadota</taxon>
        <taxon>Gammaproteobacteria</taxon>
        <taxon>Enterobacterales</taxon>
        <taxon>Enterobacteriaceae</taxon>
        <taxon>Escherichia</taxon>
    </lineage>
</organism>
<sequence>MKLLQRGVALALLTTFTLASETALAYEQDKTYKITVLHTNDHHGHFWRNEYGEYGLAAQKTLVDGIRKEVAAEGGSVLLLSGGDINTGVPESDLQDAEPDFRGMNLVGYDAMAIGNHEFDNPLTVLRQQEKWAKFPLLSANIYQKSTGERLFKPWALFKRQDLKIAVIGLTTDDTAKIGNPEYFTDIEFRKPADEAKLVIQELQQTEKPDIIIAATHMGHYDNGEHGSNAPGDVEMARALPAGSLAMIVGGHSQDPVCMAAENKKQVDYVPGTPCKPDQQNGIWIVQAHEWGKYVGRADFEFRNGEMKMVNYQLIPVNLKKKVTWEDGKSERVLYTPEIAENQQMISLLSPFQNKGKAQLEVKIGETNGRLEGDRDKVRFVQTNMGRLILAAQMDRTGADFAVMSGGGIRDSIEAGDISYKNVLKVQPFGNVVVYADMTGKEVIDYLTAVAQMKPDSGAYPQFANVSFVAKDGKLNDLKIKGEPVDPAKTYRMATLNFNATGGDGYPRLDNKPGYVNTGFIDAEVLKAYIQKSSPLDVSVYEPKGEVSWQ</sequence>
<keyword id="KW-0002">3D-structure</keyword>
<keyword id="KW-0903">Direct protein sequencing</keyword>
<keyword id="KW-1015">Disulfide bond</keyword>
<keyword id="KW-0378">Hydrolase</keyword>
<keyword id="KW-0479">Metal-binding</keyword>
<keyword id="KW-0547">Nucleotide-binding</keyword>
<keyword id="KW-0574">Periplasm</keyword>
<keyword id="KW-1185">Reference proteome</keyword>
<keyword id="KW-0732">Signal</keyword>
<keyword id="KW-0862">Zinc</keyword>
<gene>
    <name type="primary">ushA</name>
    <name type="ordered locus">b0480</name>
    <name type="ordered locus">JW0469</name>
</gene>
<proteinExistence type="evidence at protein level"/>
<evidence type="ECO:0000269" key="1">
    <source>
    </source>
</evidence>
<evidence type="ECO:0000269" key="2">
    <source>
    </source>
</evidence>
<evidence type="ECO:0000269" key="3">
    <source>
    </source>
</evidence>
<evidence type="ECO:0000269" key="4">
    <source>
    </source>
</evidence>
<evidence type="ECO:0000305" key="5"/>
<evidence type="ECO:0007829" key="6">
    <source>
        <dbReference type="PDB" id="1HO5"/>
    </source>
</evidence>
<evidence type="ECO:0007829" key="7">
    <source>
        <dbReference type="PDB" id="1HP1"/>
    </source>
</evidence>
<evidence type="ECO:0007829" key="8">
    <source>
        <dbReference type="PDB" id="1HPU"/>
    </source>
</evidence>
<evidence type="ECO:0007829" key="9">
    <source>
        <dbReference type="PDB" id="1OID"/>
    </source>
</evidence>
<accession>P07024</accession>
<accession>P78274</accession>
<accession>Q2MBU7</accession>
<comment type="function">
    <text>Degradation of external UDP-glucose to uridine monophosphate and glucose-1-phosphate, which can then be used by the cell.</text>
</comment>
<comment type="catalytic activity">
    <reaction>
        <text>UDP-sugar + H2O = UMP + alpha-D-aldose 1-phosphate.</text>
        <dbReference type="EC" id="3.6.1.45"/>
    </reaction>
</comment>
<comment type="catalytic activity">
    <reaction>
        <text>a ribonucleoside 5'-phosphate + H2O = a ribonucleoside + phosphate</text>
        <dbReference type="Rhea" id="RHEA:12484"/>
        <dbReference type="ChEBI" id="CHEBI:15377"/>
        <dbReference type="ChEBI" id="CHEBI:18254"/>
        <dbReference type="ChEBI" id="CHEBI:43474"/>
        <dbReference type="ChEBI" id="CHEBI:58043"/>
        <dbReference type="EC" id="3.1.3.5"/>
    </reaction>
</comment>
<comment type="cofactor">
    <cofactor>
        <name>Zn(2+)</name>
        <dbReference type="ChEBI" id="CHEBI:29105"/>
    </cofactor>
    <text>Binds 2 Zn(2+) ions per subunit.</text>
</comment>
<comment type="activity regulation">
    <text>The activity of this protein is inhibited by an intracellular protein inhibitor.</text>
</comment>
<comment type="subunit">
    <text evidence="1 2">Monomer.</text>
</comment>
<comment type="subcellular location">
    <subcellularLocation>
        <location>Periplasm</location>
    </subcellularLocation>
    <text>Exported from the cell, except a small proportion that is internally localized.</text>
</comment>
<comment type="similarity">
    <text evidence="5">Belongs to the 5'-nucleotidase family.</text>
</comment>
<feature type="signal peptide" evidence="3 4">
    <location>
        <begin position="1"/>
        <end position="25"/>
    </location>
</feature>
<feature type="chain" id="PRO_0000000031" description="Protein UshA">
    <location>
        <begin position="26"/>
        <end position="550"/>
    </location>
</feature>
<feature type="binding site">
    <location>
        <position position="41"/>
    </location>
    <ligand>
        <name>Zn(2+)</name>
        <dbReference type="ChEBI" id="CHEBI:29105"/>
        <label>1</label>
    </ligand>
</feature>
<feature type="binding site">
    <location>
        <position position="43"/>
    </location>
    <ligand>
        <name>Zn(2+)</name>
        <dbReference type="ChEBI" id="CHEBI:29105"/>
        <label>1</label>
    </ligand>
</feature>
<feature type="binding site">
    <location>
        <position position="84"/>
    </location>
    <ligand>
        <name>Zn(2+)</name>
        <dbReference type="ChEBI" id="CHEBI:29105"/>
        <label>1</label>
    </ligand>
</feature>
<feature type="binding site">
    <location>
        <position position="84"/>
    </location>
    <ligand>
        <name>Zn(2+)</name>
        <dbReference type="ChEBI" id="CHEBI:29105"/>
        <label>2</label>
    </ligand>
</feature>
<feature type="binding site">
    <location>
        <position position="116"/>
    </location>
    <ligand>
        <name>Zn(2+)</name>
        <dbReference type="ChEBI" id="CHEBI:29105"/>
        <label>2</label>
    </ligand>
</feature>
<feature type="binding site">
    <location>
        <position position="217"/>
    </location>
    <ligand>
        <name>Zn(2+)</name>
        <dbReference type="ChEBI" id="CHEBI:29105"/>
        <label>2</label>
    </ligand>
</feature>
<feature type="binding site">
    <location>
        <position position="252"/>
    </location>
    <ligand>
        <name>Zn(2+)</name>
        <dbReference type="ChEBI" id="CHEBI:29105"/>
        <label>2</label>
    </ligand>
</feature>
<feature type="binding site">
    <location>
        <position position="254"/>
    </location>
    <ligand>
        <name>Zn(2+)</name>
        <dbReference type="ChEBI" id="CHEBI:29105"/>
        <label>1</label>
    </ligand>
</feature>
<feature type="binding site">
    <location>
        <begin position="375"/>
        <end position="379"/>
    </location>
    <ligand>
        <name>substrate</name>
    </ligand>
</feature>
<feature type="binding site">
    <location>
        <begin position="498"/>
        <end position="504"/>
    </location>
    <ligand>
        <name>substrate</name>
    </ligand>
</feature>
<feature type="site" description="Transition state stabilizer">
    <location>
        <position position="117"/>
    </location>
</feature>
<feature type="site" description="Transition state stabilizer">
    <location>
        <position position="120"/>
    </location>
</feature>
<feature type="disulfide bond">
    <location>
        <begin position="258"/>
        <end position="275"/>
    </location>
</feature>
<feature type="sequence conflict" description="In Ref. 1; CAA27532." evidence="5" ref="1">
    <original>P</original>
    <variation>T</variation>
    <location>
        <position position="256"/>
    </location>
</feature>
<feature type="strand" evidence="7">
    <location>
        <begin position="32"/>
        <end position="39"/>
    </location>
</feature>
<feature type="helix" evidence="7">
    <location>
        <begin position="56"/>
        <end position="73"/>
    </location>
</feature>
<feature type="strand" evidence="7">
    <location>
        <begin position="76"/>
        <end position="81"/>
    </location>
</feature>
<feature type="strand" evidence="7">
    <location>
        <begin position="86"/>
        <end position="88"/>
    </location>
</feature>
<feature type="helix" evidence="7">
    <location>
        <begin position="90"/>
        <end position="93"/>
    </location>
</feature>
<feature type="turn" evidence="7">
    <location>
        <begin position="94"/>
        <end position="97"/>
    </location>
</feature>
<feature type="helix" evidence="7">
    <location>
        <begin position="98"/>
        <end position="107"/>
    </location>
</feature>
<feature type="strand" evidence="7">
    <location>
        <begin position="111"/>
        <end position="113"/>
    </location>
</feature>
<feature type="helix" evidence="7">
    <location>
        <begin position="116"/>
        <end position="119"/>
    </location>
</feature>
<feature type="helix" evidence="7">
    <location>
        <begin position="123"/>
        <end position="132"/>
    </location>
</feature>
<feature type="strand" evidence="7">
    <location>
        <begin position="140"/>
        <end position="144"/>
    </location>
</feature>
<feature type="turn" evidence="7">
    <location>
        <begin position="145"/>
        <end position="147"/>
    </location>
</feature>
<feature type="strand" evidence="7">
    <location>
        <begin position="150"/>
        <end position="160"/>
    </location>
</feature>
<feature type="strand" evidence="7">
    <location>
        <begin position="163"/>
        <end position="171"/>
    </location>
</feature>
<feature type="turn" evidence="7">
    <location>
        <begin position="173"/>
        <end position="177"/>
    </location>
</feature>
<feature type="strand" evidence="7">
    <location>
        <begin position="178"/>
        <end position="180"/>
    </location>
</feature>
<feature type="helix" evidence="8">
    <location>
        <begin position="181"/>
        <end position="184"/>
    </location>
</feature>
<feature type="strand" evidence="7">
    <location>
        <begin position="187"/>
        <end position="189"/>
    </location>
</feature>
<feature type="helix" evidence="7">
    <location>
        <begin position="192"/>
        <end position="206"/>
    </location>
</feature>
<feature type="strand" evidence="7">
    <location>
        <begin position="210"/>
        <end position="218"/>
    </location>
</feature>
<feature type="helix" evidence="7">
    <location>
        <begin position="222"/>
        <end position="224"/>
    </location>
</feature>
<feature type="helix" evidence="7">
    <location>
        <begin position="233"/>
        <end position="239"/>
    </location>
</feature>
<feature type="strand" evidence="7">
    <location>
        <begin position="244"/>
        <end position="249"/>
    </location>
</feature>
<feature type="strand" evidence="7">
    <location>
        <begin position="259"/>
        <end position="261"/>
    </location>
</feature>
<feature type="strand" evidence="7">
    <location>
        <begin position="278"/>
        <end position="280"/>
    </location>
</feature>
<feature type="strand" evidence="7">
    <location>
        <begin position="283"/>
        <end position="286"/>
    </location>
</feature>
<feature type="strand" evidence="7">
    <location>
        <begin position="293"/>
        <end position="303"/>
    </location>
</feature>
<feature type="strand" evidence="7">
    <location>
        <begin position="306"/>
        <end position="318"/>
    </location>
</feature>
<feature type="strand" evidence="8">
    <location>
        <begin position="320"/>
        <end position="324"/>
    </location>
</feature>
<feature type="strand" evidence="9">
    <location>
        <begin position="326"/>
        <end position="328"/>
    </location>
</feature>
<feature type="strand" evidence="7">
    <location>
        <begin position="333"/>
        <end position="336"/>
    </location>
</feature>
<feature type="helix" evidence="7">
    <location>
        <begin position="343"/>
        <end position="359"/>
    </location>
</feature>
<feature type="strand" evidence="7">
    <location>
        <begin position="362"/>
        <end position="369"/>
    </location>
</feature>
<feature type="helix" evidence="7">
    <location>
        <begin position="375"/>
        <end position="378"/>
    </location>
</feature>
<feature type="helix" evidence="7">
    <location>
        <begin position="384"/>
        <end position="397"/>
    </location>
</feature>
<feature type="strand" evidence="7">
    <location>
        <begin position="400"/>
        <end position="405"/>
    </location>
</feature>
<feature type="helix" evidence="7">
    <location>
        <begin position="406"/>
        <end position="408"/>
    </location>
</feature>
<feature type="strand" evidence="7">
    <location>
        <begin position="415"/>
        <end position="419"/>
    </location>
</feature>
<feature type="helix" evidence="7">
    <location>
        <begin position="420"/>
        <end position="426"/>
    </location>
</feature>
<feature type="strand" evidence="7">
    <location>
        <begin position="432"/>
        <end position="439"/>
    </location>
</feature>
<feature type="helix" evidence="7">
    <location>
        <begin position="440"/>
        <end position="450"/>
    </location>
</feature>
<feature type="strand" evidence="7">
    <location>
        <begin position="455"/>
        <end position="457"/>
    </location>
</feature>
<feature type="strand" evidence="7">
    <location>
        <begin position="461"/>
        <end position="471"/>
    </location>
</feature>
<feature type="strand" evidence="7">
    <location>
        <begin position="474"/>
        <end position="480"/>
    </location>
</feature>
<feature type="strand" evidence="7">
    <location>
        <begin position="489"/>
        <end position="496"/>
    </location>
</feature>
<feature type="helix" evidence="7">
    <location>
        <begin position="497"/>
        <end position="500"/>
    </location>
</feature>
<feature type="helix" evidence="7">
    <location>
        <begin position="503"/>
        <end position="505"/>
    </location>
</feature>
<feature type="strand" evidence="6">
    <location>
        <begin position="512"/>
        <end position="514"/>
    </location>
</feature>
<feature type="strand" evidence="7">
    <location>
        <begin position="515"/>
        <end position="521"/>
    </location>
</feature>
<feature type="helix" evidence="7">
    <location>
        <begin position="522"/>
        <end position="533"/>
    </location>
</feature>
<feature type="helix" evidence="7">
    <location>
        <begin position="538"/>
        <end position="541"/>
    </location>
</feature>
<feature type="strand" evidence="7">
    <location>
        <begin position="545"/>
        <end position="550"/>
    </location>
</feature>
<reference key="1">
    <citation type="journal article" date="1986" name="Nucleic Acids Res.">
        <title>Nucleotide sequence and transcriptional analysis of the E. coli ushA gene, encoding periplasmic UDP-sugar hydrolase (5'-nucleotidase): regulation of the ushA gene, and the signal sequence of its encoded protein product.</title>
        <authorList>
            <person name="Burns D.M."/>
            <person name="Beacham I.R."/>
        </authorList>
    </citation>
    <scope>NUCLEOTIDE SEQUENCE [GENOMIC DNA]</scope>
    <scope>PROTEIN SEQUENCE OF 26-27</scope>
</reference>
<reference key="2">
    <citation type="submission" date="1997-01" db="EMBL/GenBank/DDBJ databases">
        <title>Sequence of minutes 4-25 of Escherichia coli.</title>
        <authorList>
            <person name="Chung E."/>
            <person name="Allen E."/>
            <person name="Araujo R."/>
            <person name="Aparicio A.M."/>
            <person name="Davis K."/>
            <person name="Duncan M."/>
            <person name="Federspiel N."/>
            <person name="Hyman R."/>
            <person name="Kalman S."/>
            <person name="Komp C."/>
            <person name="Kurdi O."/>
            <person name="Lew H."/>
            <person name="Lin D."/>
            <person name="Namath A."/>
            <person name="Oefner P."/>
            <person name="Roberts D."/>
            <person name="Schramm S."/>
            <person name="Davis R.W."/>
        </authorList>
    </citation>
    <scope>NUCLEOTIDE SEQUENCE [LARGE SCALE GENOMIC DNA]</scope>
    <source>
        <strain>K12 / MG1655 / ATCC 47076</strain>
    </source>
</reference>
<reference key="3">
    <citation type="journal article" date="1997" name="Science">
        <title>The complete genome sequence of Escherichia coli K-12.</title>
        <authorList>
            <person name="Blattner F.R."/>
            <person name="Plunkett G. III"/>
            <person name="Bloch C.A."/>
            <person name="Perna N.T."/>
            <person name="Burland V."/>
            <person name="Riley M."/>
            <person name="Collado-Vides J."/>
            <person name="Glasner J.D."/>
            <person name="Rode C.K."/>
            <person name="Mayhew G.F."/>
            <person name="Gregor J."/>
            <person name="Davis N.W."/>
            <person name="Kirkpatrick H.A."/>
            <person name="Goeden M.A."/>
            <person name="Rose D.J."/>
            <person name="Mau B."/>
            <person name="Shao Y."/>
        </authorList>
    </citation>
    <scope>NUCLEOTIDE SEQUENCE [LARGE SCALE GENOMIC DNA]</scope>
    <source>
        <strain>K12 / MG1655 / ATCC 47076</strain>
    </source>
</reference>
<reference key="4">
    <citation type="journal article" date="2006" name="Mol. Syst. Biol.">
        <title>Highly accurate genome sequences of Escherichia coli K-12 strains MG1655 and W3110.</title>
        <authorList>
            <person name="Hayashi K."/>
            <person name="Morooka N."/>
            <person name="Yamamoto Y."/>
            <person name="Fujita K."/>
            <person name="Isono K."/>
            <person name="Choi S."/>
            <person name="Ohtsubo E."/>
            <person name="Baba T."/>
            <person name="Wanner B.L."/>
            <person name="Mori H."/>
            <person name="Horiuchi T."/>
        </authorList>
    </citation>
    <scope>NUCLEOTIDE SEQUENCE [LARGE SCALE GENOMIC DNA]</scope>
    <source>
        <strain>K12 / W3110 / ATCC 27325 / DSM 5911</strain>
    </source>
</reference>
<reference key="5">
    <citation type="submission" date="1995-10" db="EMBL/GenBank/DDBJ databases">
        <authorList>
            <person name="Fujisaki S."/>
            <person name="Ohnuma S."/>
            <person name="Horiuchi T."/>
            <person name="Takahashi I."/>
            <person name="Tsukui S."/>
            <person name="Nishimura Y."/>
            <person name="Nishino T."/>
            <person name="Inokuchi H."/>
        </authorList>
    </citation>
    <scope>NUCLEOTIDE SEQUENCE [GENOMIC DNA] OF 1-41</scope>
    <source>
        <strain>K12 / DH5-alpha</strain>
    </source>
</reference>
<reference key="6">
    <citation type="journal article" date="1997" name="Electrophoresis">
        <title>Comparing the predicted and observed properties of proteins encoded in the genome of Escherichia coli K-12.</title>
        <authorList>
            <person name="Link A.J."/>
            <person name="Robison K."/>
            <person name="Church G.M."/>
        </authorList>
    </citation>
    <scope>PROTEIN SEQUENCE OF 26-37</scope>
    <source>
        <strain>K12 / EMG2</strain>
    </source>
</reference>
<reference key="7">
    <citation type="journal article" date="1999" name="Nat. Struct. Biol.">
        <title>X-ray structure of the Escherichia coli periplasmic 5'-nucleotidase containing a dimetal catalytic site.</title>
        <authorList>
            <person name="Knoefel T."/>
            <person name="Straeter N."/>
        </authorList>
    </citation>
    <scope>X-RAY CRYSTALLOGRAPHY (1.73 ANGSTROMS) OF 26-550</scope>
</reference>
<reference key="8">
    <citation type="journal article" date="2001" name="J. Mol. Biol.">
        <title>Mechanism of hydrolysis of phosphate esters by the dimetal center of 5'-nucleotidase based on crystal structures.</title>
        <authorList>
            <person name="Knoefel T."/>
            <person name="Straeter N."/>
        </authorList>
    </citation>
    <scope>X-RAY CRYSTALLOGRAPHY (1.7 ANGSTROMS) IN COMPLEX WITH SUBSTRATE; PRODUCT AND INHIBITOR</scope>
</reference>
<reference key="9">
    <citation type="journal article" date="2001" name="J. Mol. Biol.">
        <title>E. coli 5'-nucleotidase undergoes a hinge-bending domain rotation resembling a ball-and-socket motion.</title>
        <authorList>
            <person name="Knoefel T."/>
            <person name="Straeter N."/>
        </authorList>
    </citation>
    <scope>X-RAY CRYSTALLOGRAPHY (1.7 ANGSTROMS) IN COMPLEX WITH SUBSTRATE</scope>
</reference>
<dbReference type="EC" id="3.6.1.45"/>
<dbReference type="EC" id="3.1.3.5"/>
<dbReference type="EMBL" id="X03895">
    <property type="protein sequence ID" value="CAA27532.1"/>
    <property type="molecule type" value="Genomic_DNA"/>
</dbReference>
<dbReference type="EMBL" id="U82664">
    <property type="protein sequence ID" value="AAB40234.1"/>
    <property type="molecule type" value="Genomic_DNA"/>
</dbReference>
<dbReference type="EMBL" id="U00096">
    <property type="protein sequence ID" value="AAC73582.1"/>
    <property type="molecule type" value="Genomic_DNA"/>
</dbReference>
<dbReference type="EMBL" id="AP009048">
    <property type="protein sequence ID" value="BAE76259.1"/>
    <property type="molecule type" value="Genomic_DNA"/>
</dbReference>
<dbReference type="EMBL" id="D73370">
    <property type="status" value="NOT_ANNOTATED_CDS"/>
    <property type="molecule type" value="Genomic_DNA"/>
</dbReference>
<dbReference type="PIR" id="G64778">
    <property type="entry name" value="YXECUG"/>
</dbReference>
<dbReference type="RefSeq" id="NP_415013.1">
    <property type="nucleotide sequence ID" value="NC_000913.3"/>
</dbReference>
<dbReference type="RefSeq" id="WP_000771748.1">
    <property type="nucleotide sequence ID" value="NZ_LN832404.1"/>
</dbReference>
<dbReference type="PDB" id="1HO5">
    <property type="method" value="X-ray"/>
    <property type="resolution" value="2.10 A"/>
    <property type="chains" value="A/B=26-550"/>
</dbReference>
<dbReference type="PDB" id="1HP1">
    <property type="method" value="X-ray"/>
    <property type="resolution" value="1.70 A"/>
    <property type="chains" value="A=26-550"/>
</dbReference>
<dbReference type="PDB" id="1HPU">
    <property type="method" value="X-ray"/>
    <property type="resolution" value="1.85 A"/>
    <property type="chains" value="A/B/C/D=26-550"/>
</dbReference>
<dbReference type="PDB" id="1OI8">
    <property type="method" value="X-ray"/>
    <property type="resolution" value="2.10 A"/>
    <property type="chains" value="A/B=26-550"/>
</dbReference>
<dbReference type="PDB" id="1OID">
    <property type="method" value="X-ray"/>
    <property type="resolution" value="2.10 A"/>
    <property type="chains" value="A/B=26-550"/>
</dbReference>
<dbReference type="PDB" id="1OIE">
    <property type="method" value="X-ray"/>
    <property type="resolution" value="2.33 A"/>
    <property type="chains" value="A=26-550"/>
</dbReference>
<dbReference type="PDB" id="1USH">
    <property type="method" value="X-ray"/>
    <property type="resolution" value="1.73 A"/>
    <property type="chains" value="A=1-550"/>
</dbReference>
<dbReference type="PDB" id="2USH">
    <property type="method" value="X-ray"/>
    <property type="resolution" value="2.22 A"/>
    <property type="chains" value="A/B=1-550"/>
</dbReference>
<dbReference type="PDB" id="4WWL">
    <property type="method" value="X-ray"/>
    <property type="resolution" value="2.23 A"/>
    <property type="chains" value="A=26-550"/>
</dbReference>
<dbReference type="PDBsum" id="1HO5"/>
<dbReference type="PDBsum" id="1HP1"/>
<dbReference type="PDBsum" id="1HPU"/>
<dbReference type="PDBsum" id="1OI8"/>
<dbReference type="PDBsum" id="1OID"/>
<dbReference type="PDBsum" id="1OIE"/>
<dbReference type="PDBsum" id="1USH"/>
<dbReference type="PDBsum" id="2USH"/>
<dbReference type="PDBsum" id="4WWL"/>
<dbReference type="SMR" id="P07024"/>
<dbReference type="BioGRID" id="4259843">
    <property type="interactions" value="45"/>
</dbReference>
<dbReference type="DIP" id="DIP-11096N"/>
<dbReference type="FunCoup" id="P07024">
    <property type="interactions" value="320"/>
</dbReference>
<dbReference type="IntAct" id="P07024">
    <property type="interactions" value="10"/>
</dbReference>
<dbReference type="STRING" id="511145.b0480"/>
<dbReference type="DrugBank" id="DB03148">
    <property type="generic name" value="Adenosine 5'-methylenediphosphate"/>
</dbReference>
<dbReference type="jPOST" id="P07024"/>
<dbReference type="PaxDb" id="511145-b0480"/>
<dbReference type="EnsemblBacteria" id="AAC73582">
    <property type="protein sequence ID" value="AAC73582"/>
    <property type="gene ID" value="b0480"/>
</dbReference>
<dbReference type="GeneID" id="947331"/>
<dbReference type="KEGG" id="ecj:JW0469"/>
<dbReference type="KEGG" id="eco:b0480"/>
<dbReference type="KEGG" id="ecoc:C3026_02360"/>
<dbReference type="PATRIC" id="fig|1411691.4.peg.1796"/>
<dbReference type="EchoBASE" id="EB1053"/>
<dbReference type="eggNOG" id="COG0737">
    <property type="taxonomic scope" value="Bacteria"/>
</dbReference>
<dbReference type="HOGENOM" id="CLU_005854_7_0_6"/>
<dbReference type="InParanoid" id="P07024"/>
<dbReference type="OMA" id="NYDCDSP"/>
<dbReference type="OrthoDB" id="9803927at2"/>
<dbReference type="PhylomeDB" id="P07024"/>
<dbReference type="BioCyc" id="EcoCyc:USHA-MONOMER"/>
<dbReference type="BioCyc" id="MetaCyc:USHA-MONOMER"/>
<dbReference type="BRENDA" id="3.1.3.5">
    <property type="organism ID" value="2026"/>
</dbReference>
<dbReference type="SABIO-RK" id="P07024"/>
<dbReference type="EvolutionaryTrace" id="P07024"/>
<dbReference type="PRO" id="PR:P07024"/>
<dbReference type="Proteomes" id="UP000000625">
    <property type="component" value="Chromosome"/>
</dbReference>
<dbReference type="GO" id="GO:0030288">
    <property type="term" value="C:outer membrane-bounded periplasmic space"/>
    <property type="evidence" value="ECO:0000314"/>
    <property type="project" value="EcoCyc"/>
</dbReference>
<dbReference type="GO" id="GO:0008253">
    <property type="term" value="F:5'-nucleotidase activity"/>
    <property type="evidence" value="ECO:0000314"/>
    <property type="project" value="EcoCyc"/>
</dbReference>
<dbReference type="GO" id="GO:0046872">
    <property type="term" value="F:metal ion binding"/>
    <property type="evidence" value="ECO:0000314"/>
    <property type="project" value="EcoCyc"/>
</dbReference>
<dbReference type="GO" id="GO:0000166">
    <property type="term" value="F:nucleotide binding"/>
    <property type="evidence" value="ECO:0007669"/>
    <property type="project" value="UniProtKB-KW"/>
</dbReference>
<dbReference type="GO" id="GO:0008768">
    <property type="term" value="F:UDP-sugar diphosphatase activity"/>
    <property type="evidence" value="ECO:0000314"/>
    <property type="project" value="EcoCyc"/>
</dbReference>
<dbReference type="GO" id="GO:0009166">
    <property type="term" value="P:nucleotide catabolic process"/>
    <property type="evidence" value="ECO:0000269"/>
    <property type="project" value="EcoCyc"/>
</dbReference>
<dbReference type="CDD" id="cd07405">
    <property type="entry name" value="MPP_UshA_N"/>
    <property type="match status" value="1"/>
</dbReference>
<dbReference type="FunFam" id="3.60.21.10:FF:000025">
    <property type="entry name" value="Protein UshA"/>
    <property type="match status" value="1"/>
</dbReference>
<dbReference type="FunFam" id="3.90.780.10:FF:000003">
    <property type="entry name" value="Protein UshA"/>
    <property type="match status" value="1"/>
</dbReference>
<dbReference type="Gene3D" id="3.60.21.10">
    <property type="match status" value="1"/>
</dbReference>
<dbReference type="Gene3D" id="3.90.780.10">
    <property type="entry name" value="5'-Nucleotidase, C-terminal domain"/>
    <property type="match status" value="1"/>
</dbReference>
<dbReference type="InterPro" id="IPR008334">
    <property type="entry name" value="5'-Nucleotdase_C"/>
</dbReference>
<dbReference type="InterPro" id="IPR036907">
    <property type="entry name" value="5'-Nucleotdase_C_sf"/>
</dbReference>
<dbReference type="InterPro" id="IPR006146">
    <property type="entry name" value="5'-Nucleotdase_CS"/>
</dbReference>
<dbReference type="InterPro" id="IPR006179">
    <property type="entry name" value="5_nucleotidase/apyrase"/>
</dbReference>
<dbReference type="InterPro" id="IPR004843">
    <property type="entry name" value="Calcineurin-like_PHP_ApaH"/>
</dbReference>
<dbReference type="InterPro" id="IPR029052">
    <property type="entry name" value="Metallo-depent_PP-like"/>
</dbReference>
<dbReference type="NCBIfam" id="NF007109">
    <property type="entry name" value="PRK09558.1"/>
    <property type="match status" value="1"/>
</dbReference>
<dbReference type="PANTHER" id="PTHR11575">
    <property type="entry name" value="5'-NUCLEOTIDASE-RELATED"/>
    <property type="match status" value="1"/>
</dbReference>
<dbReference type="PANTHER" id="PTHR11575:SF46">
    <property type="entry name" value="PROTEIN USHA"/>
    <property type="match status" value="1"/>
</dbReference>
<dbReference type="Pfam" id="PF02872">
    <property type="entry name" value="5_nucleotid_C"/>
    <property type="match status" value="1"/>
</dbReference>
<dbReference type="Pfam" id="PF00149">
    <property type="entry name" value="Metallophos"/>
    <property type="match status" value="1"/>
</dbReference>
<dbReference type="PRINTS" id="PR01607">
    <property type="entry name" value="APYRASEFAMLY"/>
</dbReference>
<dbReference type="SUPFAM" id="SSF55816">
    <property type="entry name" value="5'-nucleotidase (syn. UDP-sugar hydrolase), C-terminal domain"/>
    <property type="match status" value="1"/>
</dbReference>
<dbReference type="SUPFAM" id="SSF56300">
    <property type="entry name" value="Metallo-dependent phosphatases"/>
    <property type="match status" value="1"/>
</dbReference>
<dbReference type="PROSITE" id="PS00785">
    <property type="entry name" value="5_NUCLEOTIDASE_1"/>
    <property type="match status" value="1"/>
</dbReference>
<dbReference type="PROSITE" id="PS00786">
    <property type="entry name" value="5_NUCLEOTIDASE_2"/>
    <property type="match status" value="1"/>
</dbReference>
<protein>
    <recommendedName>
        <fullName>Protein UshA</fullName>
    </recommendedName>
    <domain>
        <recommendedName>
            <fullName>UDP-sugar hydrolase</fullName>
            <ecNumber>3.6.1.45</ecNumber>
        </recommendedName>
        <alternativeName>
            <fullName>UDP-sugar diphosphatase</fullName>
        </alternativeName>
        <alternativeName>
            <fullName>UDP-sugar pyrophosphatase</fullName>
        </alternativeName>
    </domain>
    <domain>
        <recommendedName>
            <fullName>5'-nucleotidase</fullName>
            <shortName>5'-NT</shortName>
            <ecNumber>3.1.3.5</ecNumber>
        </recommendedName>
    </domain>
</protein>
<name>USHA_ECOLI</name>